<organism>
    <name type="scientific">Bos taurus</name>
    <name type="common">Bovine</name>
    <dbReference type="NCBI Taxonomy" id="9913"/>
    <lineage>
        <taxon>Eukaryota</taxon>
        <taxon>Metazoa</taxon>
        <taxon>Chordata</taxon>
        <taxon>Craniata</taxon>
        <taxon>Vertebrata</taxon>
        <taxon>Euteleostomi</taxon>
        <taxon>Mammalia</taxon>
        <taxon>Eutheria</taxon>
        <taxon>Laurasiatheria</taxon>
        <taxon>Artiodactyla</taxon>
        <taxon>Ruminantia</taxon>
        <taxon>Pecora</taxon>
        <taxon>Bovidae</taxon>
        <taxon>Bovinae</taxon>
        <taxon>Bos</taxon>
    </lineage>
</organism>
<protein>
    <recommendedName>
        <fullName>Oncoprotein-induced transcript 3 protein</fullName>
    </recommendedName>
</protein>
<keyword id="KW-0106">Calcium</keyword>
<keyword id="KW-1015">Disulfide bond</keyword>
<keyword id="KW-0245">EGF-like domain</keyword>
<keyword id="KW-0325">Glycoprotein</keyword>
<keyword id="KW-0539">Nucleus</keyword>
<keyword id="KW-1185">Reference proteome</keyword>
<keyword id="KW-0732">Signal</keyword>
<reference key="1">
    <citation type="submission" date="2006-02" db="EMBL/GenBank/DDBJ databases">
        <authorList>
            <consortium name="NIH - Mammalian Gene Collection (MGC) project"/>
        </authorList>
    </citation>
    <scope>NUCLEOTIDE SEQUENCE [LARGE SCALE MRNA]</scope>
    <source>
        <strain>Hereford</strain>
        <tissue>Testis</tissue>
    </source>
</reference>
<proteinExistence type="evidence at transcript level"/>
<gene>
    <name type="primary">OIT3</name>
</gene>
<feature type="signal peptide" evidence="2">
    <location>
        <begin position="1"/>
        <end position="19"/>
    </location>
</feature>
<feature type="chain" id="PRO_0000298930" description="Oncoprotein-induced transcript 3 protein">
    <location>
        <begin position="20"/>
        <end position="547"/>
    </location>
</feature>
<feature type="domain" description="EGF-like; calcium-binding" evidence="2">
    <location>
        <begin position="182"/>
        <end position="222"/>
    </location>
</feature>
<feature type="domain" description="ZP" evidence="3">
    <location>
        <begin position="267"/>
        <end position="516"/>
    </location>
</feature>
<feature type="region of interest" description="Disordered" evidence="4">
    <location>
        <begin position="520"/>
        <end position="547"/>
    </location>
</feature>
<feature type="glycosylation site" description="N-linked (GlcNAc...) asparagine" evidence="2">
    <location>
        <position position="89"/>
    </location>
</feature>
<feature type="glycosylation site" description="N-linked (GlcNAc...) asparagine" evidence="2">
    <location>
        <position position="116"/>
    </location>
</feature>
<feature type="glycosylation site" description="N-linked (GlcNAc...) asparagine" evidence="2">
    <location>
        <position position="299"/>
    </location>
</feature>
<feature type="disulfide bond" evidence="1">
    <location>
        <begin position="186"/>
        <end position="197"/>
    </location>
</feature>
<feature type="disulfide bond" evidence="1">
    <location>
        <begin position="193"/>
        <end position="206"/>
    </location>
</feature>
<feature type="disulfide bond" evidence="1">
    <location>
        <begin position="208"/>
        <end position="221"/>
    </location>
</feature>
<accession>Q29RU2</accession>
<name>OIT3_BOVIN</name>
<dbReference type="EMBL" id="BC114018">
    <property type="protein sequence ID" value="AAI14019.1"/>
    <property type="molecule type" value="mRNA"/>
</dbReference>
<dbReference type="RefSeq" id="NP_001039529.1">
    <property type="nucleotide sequence ID" value="NM_001046064.1"/>
</dbReference>
<dbReference type="SMR" id="Q29RU2"/>
<dbReference type="FunCoup" id="Q29RU2">
    <property type="interactions" value="136"/>
</dbReference>
<dbReference type="STRING" id="9913.ENSBTAP00000012305"/>
<dbReference type="GlyCosmos" id="Q29RU2">
    <property type="glycosylation" value="3 sites, No reported glycans"/>
</dbReference>
<dbReference type="GlyGen" id="Q29RU2">
    <property type="glycosylation" value="3 sites"/>
</dbReference>
<dbReference type="PaxDb" id="9913-ENSBTAP00000054245"/>
<dbReference type="GeneID" id="510915"/>
<dbReference type="KEGG" id="bta:510915"/>
<dbReference type="CTD" id="170392"/>
<dbReference type="eggNOG" id="ENOG502QW18">
    <property type="taxonomic scope" value="Eukaryota"/>
</dbReference>
<dbReference type="InParanoid" id="Q29RU2"/>
<dbReference type="OrthoDB" id="2015116at2759"/>
<dbReference type="Proteomes" id="UP000009136">
    <property type="component" value="Unplaced"/>
</dbReference>
<dbReference type="GO" id="GO:0009986">
    <property type="term" value="C:cell surface"/>
    <property type="evidence" value="ECO:0000318"/>
    <property type="project" value="GO_Central"/>
</dbReference>
<dbReference type="GO" id="GO:0005615">
    <property type="term" value="C:extracellular space"/>
    <property type="evidence" value="ECO:0000318"/>
    <property type="project" value="GO_Central"/>
</dbReference>
<dbReference type="GO" id="GO:0005635">
    <property type="term" value="C:nuclear envelope"/>
    <property type="evidence" value="ECO:0007669"/>
    <property type="project" value="UniProtKB-SubCell"/>
</dbReference>
<dbReference type="GO" id="GO:0005509">
    <property type="term" value="F:calcium ion binding"/>
    <property type="evidence" value="ECO:0007669"/>
    <property type="project" value="InterPro"/>
</dbReference>
<dbReference type="CDD" id="cd00054">
    <property type="entry name" value="EGF_CA"/>
    <property type="match status" value="1"/>
</dbReference>
<dbReference type="FunFam" id="2.10.25.10:FF:000203">
    <property type="entry name" value="oncoprotein-induced transcript 3 protein"/>
    <property type="match status" value="2"/>
</dbReference>
<dbReference type="FunFam" id="2.60.40.3210:FF:000004">
    <property type="entry name" value="oncoprotein-induced transcript 3 protein"/>
    <property type="match status" value="1"/>
</dbReference>
<dbReference type="FunFam" id="2.60.40.4100:FF:000007">
    <property type="entry name" value="oncoprotein-induced transcript 3 protein"/>
    <property type="match status" value="1"/>
</dbReference>
<dbReference type="Gene3D" id="2.10.25.10">
    <property type="entry name" value="Laminin"/>
    <property type="match status" value="2"/>
</dbReference>
<dbReference type="Gene3D" id="2.60.40.4100">
    <property type="entry name" value="Zona pellucida, ZP-C domain"/>
    <property type="match status" value="1"/>
</dbReference>
<dbReference type="Gene3D" id="2.60.40.3210">
    <property type="entry name" value="Zona pellucida, ZP-N domain"/>
    <property type="match status" value="1"/>
</dbReference>
<dbReference type="InterPro" id="IPR001881">
    <property type="entry name" value="EGF-like_Ca-bd_dom"/>
</dbReference>
<dbReference type="InterPro" id="IPR000742">
    <property type="entry name" value="EGF-like_dom"/>
</dbReference>
<dbReference type="InterPro" id="IPR018097">
    <property type="entry name" value="EGF_Ca-bd_CS"/>
</dbReference>
<dbReference type="InterPro" id="IPR009030">
    <property type="entry name" value="Growth_fac_rcpt_cys_sf"/>
</dbReference>
<dbReference type="InterPro" id="IPR055355">
    <property type="entry name" value="ZP-C"/>
</dbReference>
<dbReference type="InterPro" id="IPR042235">
    <property type="entry name" value="ZP-C_dom"/>
</dbReference>
<dbReference type="InterPro" id="IPR048290">
    <property type="entry name" value="ZP_chr"/>
</dbReference>
<dbReference type="InterPro" id="IPR001507">
    <property type="entry name" value="ZP_dom"/>
</dbReference>
<dbReference type="PANTHER" id="PTHR14002">
    <property type="entry name" value="ENDOGLIN/TGF-BETA RECEPTOR TYPE III"/>
    <property type="match status" value="1"/>
</dbReference>
<dbReference type="PANTHER" id="PTHR14002:SF18">
    <property type="entry name" value="ONCOPROTEIN-INDUCED TRANSCRIPT 3 PROTEIN"/>
    <property type="match status" value="1"/>
</dbReference>
<dbReference type="Pfam" id="PF23283">
    <property type="entry name" value="D8C_UMOD"/>
    <property type="match status" value="1"/>
</dbReference>
<dbReference type="Pfam" id="PF14670">
    <property type="entry name" value="FXa_inhibition"/>
    <property type="match status" value="2"/>
</dbReference>
<dbReference type="Pfam" id="PF00100">
    <property type="entry name" value="Zona_pellucida"/>
    <property type="match status" value="1"/>
</dbReference>
<dbReference type="PRINTS" id="PR00023">
    <property type="entry name" value="ZPELLUCIDA"/>
</dbReference>
<dbReference type="SMART" id="SM00181">
    <property type="entry name" value="EGF"/>
    <property type="match status" value="3"/>
</dbReference>
<dbReference type="SMART" id="SM00179">
    <property type="entry name" value="EGF_CA"/>
    <property type="match status" value="2"/>
</dbReference>
<dbReference type="SMART" id="SM00241">
    <property type="entry name" value="ZP"/>
    <property type="match status" value="1"/>
</dbReference>
<dbReference type="SUPFAM" id="SSF57196">
    <property type="entry name" value="EGF/Laminin"/>
    <property type="match status" value="1"/>
</dbReference>
<dbReference type="SUPFAM" id="SSF57184">
    <property type="entry name" value="Growth factor receptor domain"/>
    <property type="match status" value="1"/>
</dbReference>
<dbReference type="PROSITE" id="PS00010">
    <property type="entry name" value="ASX_HYDROXYL"/>
    <property type="match status" value="1"/>
</dbReference>
<dbReference type="PROSITE" id="PS01187">
    <property type="entry name" value="EGF_CA"/>
    <property type="match status" value="1"/>
</dbReference>
<dbReference type="PROSITE" id="PS51034">
    <property type="entry name" value="ZP_2"/>
    <property type="match status" value="1"/>
</dbReference>
<comment type="function">
    <text evidence="1">May be involved in hepatocellular function and development.</text>
</comment>
<comment type="subcellular location">
    <subcellularLocation>
        <location evidence="1">Nucleus envelope</location>
    </subcellularLocation>
    <text evidence="1">Can be secreted into blood.</text>
</comment>
<sequence>MPQLLLLACLLIIVTRVAPRALDPCSAYISLNEPWRNTEHQFDESRGSPLCDNSVDGEWYRFTGMAGDAMPTFCIPENHCGTHAPVWLNGSHPLEGDGIVQRQACASFNGNCCLWNTTVEVKSCPGGYYVYRLTKPSVCFHVYCGHFYDICDDDCHGSCLGTSECTCAPGTVLGPDRQTCFDENECEQNNGGCSEICVNLKNSYRCECGIGRVLRSDGKTCEDIEGCHNNNGGCSHSCLTSETGYQCECPRGLVLSEDNHTCQVPVFCKSNTIEVSIPRDLVGGLELFLTNTSCRGVSNGTHVNILFSLKTCGTVVDVVNDKIVASNLVTGLPKQTPGSSGDIIIRTSKLLIPVTCEFPRLYTISEGYVPNLRNTPLEIMSRSHGIFPFTLEIFKDHEFEEPYREALPTLKLRDSLYFGIEPLVHVNGLESLVESCFATPTSKIDEIMKYYIIQDGCVSDDSVKQYTSRDHLAKHFQVPVFKFVGKDHKEVFLHCRVLVCGMLDERSRCAQGCHRRVRREASTEGEDASGPRSQMLTGGPISIDWED</sequence>
<evidence type="ECO:0000250" key="1"/>
<evidence type="ECO:0000255" key="2"/>
<evidence type="ECO:0000255" key="3">
    <source>
        <dbReference type="PROSITE-ProRule" id="PRU00375"/>
    </source>
</evidence>
<evidence type="ECO:0000256" key="4">
    <source>
        <dbReference type="SAM" id="MobiDB-lite"/>
    </source>
</evidence>